<comment type="function">
    <text evidence="3 4 6">G protein-coupled receptor activated by the neuropeptides vasoactive intestinal peptide (VIP) and pituitary adenylate cyclase-activating polypeptide (ADCYAP1/PACAP) (PubMed:7811244, PubMed:35477937, PubMed:8933357). Binds VIP and both PACAP27 and PACAP38 bioactive peptides with the following order of potency PACAP38 = VIP &gt; PACAP27 (PubMed:35477937, PubMed:8933357). Ligand binding causes a conformation change that triggers signaling via guanine nucleotide-binding proteins (G proteins) and modulates the activity of downstream effectors. Activates cAMP-dependent pathway (PubMed:7811244, PubMed:35477937, PubMed:8933357). May be coupled to phospholipase C.</text>
</comment>
<comment type="subunit">
    <text evidence="3 10">Interacts with ADCYAP1/PACAP (via N-terminal extracellular domain); activated by PACAP27 and CAPAC38 neuropeptides (Probable) (PubMed:35477937). Interacts with VIP; the interaction results in VIPR1 activation (Probable).</text>
</comment>
<comment type="subcellular location">
    <subcellularLocation>
        <location>Cell membrane</location>
        <topology evidence="3">Multi-pass membrane protein</topology>
    </subcellularLocation>
</comment>
<comment type="alternative products">
    <event type="alternative splicing"/>
    <isoform>
        <id>P41587-1</id>
        <name>1</name>
        <sequence type="displayed"/>
    </isoform>
    <isoform>
        <id>P41587-2</id>
        <name>2</name>
        <sequence type="described" ref="VSP_056684 VSP_056685"/>
    </isoform>
</comment>
<comment type="tissue specificity">
    <text evidence="5">Expressed in CD4+ T-cells, but not in CD8+ T-cells. Expressed in the T-cell lines Jurkat, Peer, MOLT-4, HSB, YT and SUP-T1, but not in the T-cell lines HARRIS and HuT 78.</text>
</comment>
<comment type="similarity">
    <text evidence="9">Belongs to the G-protein coupled receptor 2 family.</text>
</comment>
<organism>
    <name type="scientific">Homo sapiens</name>
    <name type="common">Human</name>
    <dbReference type="NCBI Taxonomy" id="9606"/>
    <lineage>
        <taxon>Eukaryota</taxon>
        <taxon>Metazoa</taxon>
        <taxon>Chordata</taxon>
        <taxon>Craniata</taxon>
        <taxon>Vertebrata</taxon>
        <taxon>Euteleostomi</taxon>
        <taxon>Mammalia</taxon>
        <taxon>Eutheria</taxon>
        <taxon>Euarchontoglires</taxon>
        <taxon>Primates</taxon>
        <taxon>Haplorrhini</taxon>
        <taxon>Catarrhini</taxon>
        <taxon>Hominidae</taxon>
        <taxon>Homo</taxon>
    </lineage>
</organism>
<gene>
    <name evidence="11" type="primary">VIPR2</name>
    <name type="synonym">VIP2R</name>
</gene>
<protein>
    <recommendedName>
        <fullName>Vasoactive intestinal polypeptide receptor 2</fullName>
        <shortName>VIP-R-2</shortName>
    </recommendedName>
    <alternativeName>
        <fullName>Helodermin-preferring VIP receptor</fullName>
    </alternativeName>
    <alternativeName>
        <fullName>Pituitary adenylate cyclase-activating polypeptide type III receptor</fullName>
        <shortName>PACAP type III receptor</shortName>
        <shortName>PACAP-R-3</shortName>
        <shortName>PACAP-R3</shortName>
    </alternativeName>
    <alternativeName>
        <fullName>VPAC2 receptor</fullName>
        <shortName evidence="1">VPAC2R</shortName>
    </alternativeName>
</protein>
<proteinExistence type="evidence at protein level"/>
<keyword id="KW-0002">3D-structure</keyword>
<keyword id="KW-0025">Alternative splicing</keyword>
<keyword id="KW-1003">Cell membrane</keyword>
<keyword id="KW-1015">Disulfide bond</keyword>
<keyword id="KW-0297">G-protein coupled receptor</keyword>
<keyword id="KW-0325">Glycoprotein</keyword>
<keyword id="KW-0472">Membrane</keyword>
<keyword id="KW-1267">Proteomics identification</keyword>
<keyword id="KW-0675">Receptor</keyword>
<keyword id="KW-1185">Reference proteome</keyword>
<keyword id="KW-0732">Signal</keyword>
<keyword id="KW-0807">Transducer</keyword>
<keyword id="KW-0812">Transmembrane</keyword>
<keyword id="KW-1133">Transmembrane helix</keyword>
<sequence>MRTLLPPALLTCWLLAPVNSIHPECRFHLEIQEEETKCAELLRSQTEKHKACSGVWDNITCWRPANVGETVTVPCPKVFSNFYSKAGNISKNCTSDGWSETFPDFVDACGYSDPEDESKITFYILVKAIYTLGYSVSLMSLATGSIILCLFRKLHCTRNYIHLNLFLSFILRAISVLVKDDVLYSSSGTLHCPDQPSSWVGCKLSLVFLQYCIMANFFWLLVEGLYLHTLLVAMLPPRRCFLAYLLIGWGLPTVCIGAWTAARLYLEDTGCWDTNDHSVPWWVIRIPILISIIVNFVLFISIIRILLQKLTSPDVGGNDQSQYKRLAKSTLLLIPLFGVHYMVFAVFPISISSKYQILFELCLGSFQGLVVAVLYCFLNSEVQCELKRKWRSRCPTPSASRDYRVCGSSFSRNGSEGALQFHRGSRAQSFLQTETSVI</sequence>
<evidence type="ECO:0000250" key="1">
    <source>
        <dbReference type="UniProtKB" id="P32241"/>
    </source>
</evidence>
<evidence type="ECO:0000255" key="2"/>
<evidence type="ECO:0000269" key="3">
    <source>
    </source>
</evidence>
<evidence type="ECO:0000269" key="4">
    <source>
    </source>
</evidence>
<evidence type="ECO:0000269" key="5">
    <source>
    </source>
</evidence>
<evidence type="ECO:0000269" key="6">
    <source>
    </source>
</evidence>
<evidence type="ECO:0000269" key="7">
    <source ref="12"/>
</evidence>
<evidence type="ECO:0000303" key="8">
    <source>
    </source>
</evidence>
<evidence type="ECO:0000305" key="9"/>
<evidence type="ECO:0000305" key="10">
    <source>
    </source>
</evidence>
<evidence type="ECO:0000312" key="11">
    <source>
        <dbReference type="HGNC" id="HGNC:12695"/>
    </source>
</evidence>
<evidence type="ECO:0007744" key="12">
    <source>
        <dbReference type="PDB" id="7VQX"/>
    </source>
</evidence>
<evidence type="ECO:0007744" key="13">
    <source>
        <dbReference type="PDB" id="7WBJ"/>
    </source>
</evidence>
<evidence type="ECO:0007829" key="14">
    <source>
        <dbReference type="PDB" id="2X57"/>
    </source>
</evidence>
<evidence type="ECO:0007829" key="15">
    <source>
        <dbReference type="PDB" id="7VQX"/>
    </source>
</evidence>
<evidence type="ECO:0007829" key="16">
    <source>
        <dbReference type="PDB" id="7WBJ"/>
    </source>
</evidence>
<reference key="1">
    <citation type="journal article" date="1994" name="Biochem. Biophys. Res. Commun.">
        <title>Molecular cloning and functional characterization of a human VIP receptor from SUP-T1 lymphoblasts.</title>
        <authorList>
            <person name="Svoboda M."/>
            <person name="Tastenoy M."/>
            <person name="van Rampelbergh J."/>
            <person name="Goossens J.-F."/>
            <person name="Neef P."/>
            <person name="Waelbroeck M."/>
            <person name="Robberecht P."/>
        </authorList>
    </citation>
    <scope>NUCLEOTIDE SEQUENCE [GENOMIC DNA / MRNA] (ISOFORM 1)</scope>
    <scope>FUNCTION</scope>
</reference>
<reference key="2">
    <citation type="journal article" date="1996" name="Genomics">
        <title>Chromosomal localization in mouse and human of the vasoactive intestinal peptide receptor type 2 gene: a possible contributor to the holoprosencephaly 3 phenotype.</title>
        <authorList>
            <person name="Mackay M."/>
            <person name="Fantes J."/>
            <person name="Scherer S."/>
            <person name="Boyle S."/>
            <person name="West K."/>
            <person name="Tsui L.-C."/>
            <person name="Belloni E."/>
            <person name="Lutz E."/>
            <person name="van Heyningen V."/>
            <person name="Harmar A.J."/>
        </authorList>
    </citation>
    <scope>NUCLEOTIDE SEQUENCE [GENOMIC DNA]</scope>
</reference>
<reference key="3">
    <citation type="journal article" date="1996" name="J. Neuroendocrinol.">
        <title>Tissue specific expression of different human receptor types for pituitary adenylate cyclase activating polypeptide and vasoactive intestinal polypeptide: implications for their role in human physiology.</title>
        <authorList>
            <person name="Wei Y."/>
            <person name="Mojsov S."/>
        </authorList>
    </citation>
    <scope>NUCLEOTIDE SEQUENCE [MRNA] (ISOFORM 1)</scope>
    <scope>FUNCTION</scope>
    <scope>INTERACTION WITH VIP</scope>
    <source>
        <tissue>Adipose tissue</tissue>
    </source>
</reference>
<reference key="4">
    <citation type="journal article" date="1999" name="FEBS Lett.">
        <title>Structure of the human VIP2R gene for vasoactive intestinal peptide type 2 receptor.</title>
        <authorList>
            <person name="Lutz E.M."/>
            <person name="Shen S."/>
            <person name="Mackay M."/>
            <person name="West K."/>
            <person name="Harmar A.J."/>
        </authorList>
    </citation>
    <scope>NUCLEOTIDE SEQUENCE [GENOMIC DNA / MRNA] (ISOFORM 1)</scope>
</reference>
<reference key="5">
    <citation type="submission" date="2003-05" db="EMBL/GenBank/DDBJ databases">
        <title>Cloning of human full-length CDSs in BD Creator(TM) system donor vector.</title>
        <authorList>
            <person name="Kalnine N."/>
            <person name="Chen X."/>
            <person name="Rolfs A."/>
            <person name="Halleck A."/>
            <person name="Hines L."/>
            <person name="Eisenstein S."/>
            <person name="Koundinya M."/>
            <person name="Raphael J."/>
            <person name="Moreira D."/>
            <person name="Kelley T."/>
            <person name="LaBaer J."/>
            <person name="Lin Y."/>
            <person name="Phelan M."/>
            <person name="Farmer A."/>
        </authorList>
    </citation>
    <scope>NUCLEOTIDE SEQUENCE [LARGE SCALE MRNA] (ISOFORM 1)</scope>
</reference>
<reference key="6">
    <citation type="journal article" date="2004" name="Nat. Genet.">
        <title>Complete sequencing and characterization of 21,243 full-length human cDNAs.</title>
        <authorList>
            <person name="Ota T."/>
            <person name="Suzuki Y."/>
            <person name="Nishikawa T."/>
            <person name="Otsuki T."/>
            <person name="Sugiyama T."/>
            <person name="Irie R."/>
            <person name="Wakamatsu A."/>
            <person name="Hayashi K."/>
            <person name="Sato H."/>
            <person name="Nagai K."/>
            <person name="Kimura K."/>
            <person name="Makita H."/>
            <person name="Sekine M."/>
            <person name="Obayashi M."/>
            <person name="Nishi T."/>
            <person name="Shibahara T."/>
            <person name="Tanaka T."/>
            <person name="Ishii S."/>
            <person name="Yamamoto J."/>
            <person name="Saito K."/>
            <person name="Kawai Y."/>
            <person name="Isono Y."/>
            <person name="Nakamura Y."/>
            <person name="Nagahari K."/>
            <person name="Murakami K."/>
            <person name="Yasuda T."/>
            <person name="Iwayanagi T."/>
            <person name="Wagatsuma M."/>
            <person name="Shiratori A."/>
            <person name="Sudo H."/>
            <person name="Hosoiri T."/>
            <person name="Kaku Y."/>
            <person name="Kodaira H."/>
            <person name="Kondo H."/>
            <person name="Sugawara M."/>
            <person name="Takahashi M."/>
            <person name="Kanda K."/>
            <person name="Yokoi T."/>
            <person name="Furuya T."/>
            <person name="Kikkawa E."/>
            <person name="Omura Y."/>
            <person name="Abe K."/>
            <person name="Kamihara K."/>
            <person name="Katsuta N."/>
            <person name="Sato K."/>
            <person name="Tanikawa M."/>
            <person name="Yamazaki M."/>
            <person name="Ninomiya K."/>
            <person name="Ishibashi T."/>
            <person name="Yamashita H."/>
            <person name="Murakawa K."/>
            <person name="Fujimori K."/>
            <person name="Tanai H."/>
            <person name="Kimata M."/>
            <person name="Watanabe M."/>
            <person name="Hiraoka S."/>
            <person name="Chiba Y."/>
            <person name="Ishida S."/>
            <person name="Ono Y."/>
            <person name="Takiguchi S."/>
            <person name="Watanabe S."/>
            <person name="Yosida M."/>
            <person name="Hotuta T."/>
            <person name="Kusano J."/>
            <person name="Kanehori K."/>
            <person name="Takahashi-Fujii A."/>
            <person name="Hara H."/>
            <person name="Tanase T.-O."/>
            <person name="Nomura Y."/>
            <person name="Togiya S."/>
            <person name="Komai F."/>
            <person name="Hara R."/>
            <person name="Takeuchi K."/>
            <person name="Arita M."/>
            <person name="Imose N."/>
            <person name="Musashino K."/>
            <person name="Yuuki H."/>
            <person name="Oshima A."/>
            <person name="Sasaki N."/>
            <person name="Aotsuka S."/>
            <person name="Yoshikawa Y."/>
            <person name="Matsunawa H."/>
            <person name="Ichihara T."/>
            <person name="Shiohata N."/>
            <person name="Sano S."/>
            <person name="Moriya S."/>
            <person name="Momiyama H."/>
            <person name="Satoh N."/>
            <person name="Takami S."/>
            <person name="Terashima Y."/>
            <person name="Suzuki O."/>
            <person name="Nakagawa S."/>
            <person name="Senoh A."/>
            <person name="Mizoguchi H."/>
            <person name="Goto Y."/>
            <person name="Shimizu F."/>
            <person name="Wakebe H."/>
            <person name="Hishigaki H."/>
            <person name="Watanabe T."/>
            <person name="Sugiyama A."/>
            <person name="Takemoto M."/>
            <person name="Kawakami B."/>
            <person name="Yamazaki M."/>
            <person name="Watanabe K."/>
            <person name="Kumagai A."/>
            <person name="Itakura S."/>
            <person name="Fukuzumi Y."/>
            <person name="Fujimori Y."/>
            <person name="Komiyama M."/>
            <person name="Tashiro H."/>
            <person name="Tanigami A."/>
            <person name="Fujiwara T."/>
            <person name="Ono T."/>
            <person name="Yamada K."/>
            <person name="Fujii Y."/>
            <person name="Ozaki K."/>
            <person name="Hirao M."/>
            <person name="Ohmori Y."/>
            <person name="Kawabata A."/>
            <person name="Hikiji T."/>
            <person name="Kobatake N."/>
            <person name="Inagaki H."/>
            <person name="Ikema Y."/>
            <person name="Okamoto S."/>
            <person name="Okitani R."/>
            <person name="Kawakami T."/>
            <person name="Noguchi S."/>
            <person name="Itoh T."/>
            <person name="Shigeta K."/>
            <person name="Senba T."/>
            <person name="Matsumura K."/>
            <person name="Nakajima Y."/>
            <person name="Mizuno T."/>
            <person name="Morinaga M."/>
            <person name="Sasaki M."/>
            <person name="Togashi T."/>
            <person name="Oyama M."/>
            <person name="Hata H."/>
            <person name="Watanabe M."/>
            <person name="Komatsu T."/>
            <person name="Mizushima-Sugano J."/>
            <person name="Satoh T."/>
            <person name="Shirai Y."/>
            <person name="Takahashi Y."/>
            <person name="Nakagawa K."/>
            <person name="Okumura K."/>
            <person name="Nagase T."/>
            <person name="Nomura N."/>
            <person name="Kikuchi H."/>
            <person name="Masuho Y."/>
            <person name="Yamashita R."/>
            <person name="Nakai K."/>
            <person name="Yada T."/>
            <person name="Nakamura Y."/>
            <person name="Ohara O."/>
            <person name="Isogai T."/>
            <person name="Sugano S."/>
        </authorList>
    </citation>
    <scope>NUCLEOTIDE SEQUENCE [LARGE SCALE MRNA] (ISOFORM 2)</scope>
    <source>
        <tissue>Heart</tissue>
    </source>
</reference>
<reference key="7">
    <citation type="journal article" date="2003" name="Nature">
        <title>The DNA sequence of human chromosome 7.</title>
        <authorList>
            <person name="Hillier L.W."/>
            <person name="Fulton R.S."/>
            <person name="Fulton L.A."/>
            <person name="Graves T.A."/>
            <person name="Pepin K.H."/>
            <person name="Wagner-McPherson C."/>
            <person name="Layman D."/>
            <person name="Maas J."/>
            <person name="Jaeger S."/>
            <person name="Walker R."/>
            <person name="Wylie K."/>
            <person name="Sekhon M."/>
            <person name="Becker M.C."/>
            <person name="O'Laughlin M.D."/>
            <person name="Schaller M.E."/>
            <person name="Fewell G.A."/>
            <person name="Delehaunty K.D."/>
            <person name="Miner T.L."/>
            <person name="Nash W.E."/>
            <person name="Cordes M."/>
            <person name="Du H."/>
            <person name="Sun H."/>
            <person name="Edwards J."/>
            <person name="Bradshaw-Cordum H."/>
            <person name="Ali J."/>
            <person name="Andrews S."/>
            <person name="Isak A."/>
            <person name="Vanbrunt A."/>
            <person name="Nguyen C."/>
            <person name="Du F."/>
            <person name="Lamar B."/>
            <person name="Courtney L."/>
            <person name="Kalicki J."/>
            <person name="Ozersky P."/>
            <person name="Bielicki L."/>
            <person name="Scott K."/>
            <person name="Holmes A."/>
            <person name="Harkins R."/>
            <person name="Harris A."/>
            <person name="Strong C.M."/>
            <person name="Hou S."/>
            <person name="Tomlinson C."/>
            <person name="Dauphin-Kohlberg S."/>
            <person name="Kozlowicz-Reilly A."/>
            <person name="Leonard S."/>
            <person name="Rohlfing T."/>
            <person name="Rock S.M."/>
            <person name="Tin-Wollam A.-M."/>
            <person name="Abbott A."/>
            <person name="Minx P."/>
            <person name="Maupin R."/>
            <person name="Strowmatt C."/>
            <person name="Latreille P."/>
            <person name="Miller N."/>
            <person name="Johnson D."/>
            <person name="Murray J."/>
            <person name="Woessner J.P."/>
            <person name="Wendl M.C."/>
            <person name="Yang S.-P."/>
            <person name="Schultz B.R."/>
            <person name="Wallis J.W."/>
            <person name="Spieth J."/>
            <person name="Bieri T.A."/>
            <person name="Nelson J.O."/>
            <person name="Berkowicz N."/>
            <person name="Wohldmann P.E."/>
            <person name="Cook L.L."/>
            <person name="Hickenbotham M.T."/>
            <person name="Eldred J."/>
            <person name="Williams D."/>
            <person name="Bedell J.A."/>
            <person name="Mardis E.R."/>
            <person name="Clifton S.W."/>
            <person name="Chissoe S.L."/>
            <person name="Marra M.A."/>
            <person name="Raymond C."/>
            <person name="Haugen E."/>
            <person name="Gillett W."/>
            <person name="Zhou Y."/>
            <person name="James R."/>
            <person name="Phelps K."/>
            <person name="Iadanoto S."/>
            <person name="Bubb K."/>
            <person name="Simms E."/>
            <person name="Levy R."/>
            <person name="Clendenning J."/>
            <person name="Kaul R."/>
            <person name="Kent W.J."/>
            <person name="Furey T.S."/>
            <person name="Baertsch R.A."/>
            <person name="Brent M.R."/>
            <person name="Keibler E."/>
            <person name="Flicek P."/>
            <person name="Bork P."/>
            <person name="Suyama M."/>
            <person name="Bailey J.A."/>
            <person name="Portnoy M.E."/>
            <person name="Torrents D."/>
            <person name="Chinwalla A.T."/>
            <person name="Gish W.R."/>
            <person name="Eddy S.R."/>
            <person name="McPherson J.D."/>
            <person name="Olson M.V."/>
            <person name="Eichler E.E."/>
            <person name="Green E.D."/>
            <person name="Waterston R.H."/>
            <person name="Wilson R.K."/>
        </authorList>
    </citation>
    <scope>NUCLEOTIDE SEQUENCE [LARGE SCALE GENOMIC DNA]</scope>
</reference>
<reference key="8">
    <citation type="journal article" date="2003" name="Science">
        <title>Human chromosome 7: DNA sequence and biology.</title>
        <authorList>
            <person name="Scherer S.W."/>
            <person name="Cheung J."/>
            <person name="MacDonald J.R."/>
            <person name="Osborne L.R."/>
            <person name="Nakabayashi K."/>
            <person name="Herbrick J.-A."/>
            <person name="Carson A.R."/>
            <person name="Parker-Katiraee L."/>
            <person name="Skaug J."/>
            <person name="Khaja R."/>
            <person name="Zhang J."/>
            <person name="Hudek A.K."/>
            <person name="Li M."/>
            <person name="Haddad M."/>
            <person name="Duggan G.E."/>
            <person name="Fernandez B.A."/>
            <person name="Kanematsu E."/>
            <person name="Gentles S."/>
            <person name="Christopoulos C.C."/>
            <person name="Choufani S."/>
            <person name="Kwasnicka D."/>
            <person name="Zheng X.H."/>
            <person name="Lai Z."/>
            <person name="Nusskern D.R."/>
            <person name="Zhang Q."/>
            <person name="Gu Z."/>
            <person name="Lu F."/>
            <person name="Zeesman S."/>
            <person name="Nowaczyk M.J."/>
            <person name="Teshima I."/>
            <person name="Chitayat D."/>
            <person name="Shuman C."/>
            <person name="Weksberg R."/>
            <person name="Zackai E.H."/>
            <person name="Grebe T.A."/>
            <person name="Cox S.R."/>
            <person name="Kirkpatrick S.J."/>
            <person name="Rahman N."/>
            <person name="Friedman J.M."/>
            <person name="Heng H.H.Q."/>
            <person name="Pelicci P.G."/>
            <person name="Lo-Coco F."/>
            <person name="Belloni E."/>
            <person name="Shaffer L.G."/>
            <person name="Pober B."/>
            <person name="Morton C.C."/>
            <person name="Gusella J.F."/>
            <person name="Bruns G.A.P."/>
            <person name="Korf B.R."/>
            <person name="Quade B.J."/>
            <person name="Ligon A.H."/>
            <person name="Ferguson H."/>
            <person name="Higgins A.W."/>
            <person name="Leach N.T."/>
            <person name="Herrick S.R."/>
            <person name="Lemyre E."/>
            <person name="Farra C.G."/>
            <person name="Kim H.-G."/>
            <person name="Summers A.M."/>
            <person name="Gripp K.W."/>
            <person name="Roberts W."/>
            <person name="Szatmari P."/>
            <person name="Winsor E.J.T."/>
            <person name="Grzeschik K.-H."/>
            <person name="Teebi A."/>
            <person name="Minassian B.A."/>
            <person name="Kere J."/>
            <person name="Armengol L."/>
            <person name="Pujana M.A."/>
            <person name="Estivill X."/>
            <person name="Wilson M.D."/>
            <person name="Koop B.F."/>
            <person name="Tosi S."/>
            <person name="Moore G.E."/>
            <person name="Boright A.P."/>
            <person name="Zlotorynski E."/>
            <person name="Kerem B."/>
            <person name="Kroisel P.M."/>
            <person name="Petek E."/>
            <person name="Oscier D.G."/>
            <person name="Mould S.J."/>
            <person name="Doehner H."/>
            <person name="Doehner K."/>
            <person name="Rommens J.M."/>
            <person name="Vincent J.B."/>
            <person name="Venter J.C."/>
            <person name="Li P.W."/>
            <person name="Mural R.J."/>
            <person name="Adams M.D."/>
            <person name="Tsui L.-C."/>
        </authorList>
    </citation>
    <scope>NUCLEOTIDE SEQUENCE [LARGE SCALE GENOMIC DNA]</scope>
</reference>
<reference key="9">
    <citation type="submission" date="2005-07" db="EMBL/GenBank/DDBJ databases">
        <authorList>
            <person name="Mural R.J."/>
            <person name="Istrail S."/>
            <person name="Sutton G.G."/>
            <person name="Florea L."/>
            <person name="Halpern A.L."/>
            <person name="Mobarry C.M."/>
            <person name="Lippert R."/>
            <person name="Walenz B."/>
            <person name="Shatkay H."/>
            <person name="Dew I."/>
            <person name="Miller J.R."/>
            <person name="Flanigan M.J."/>
            <person name="Edwards N.J."/>
            <person name="Bolanos R."/>
            <person name="Fasulo D."/>
            <person name="Halldorsson B.V."/>
            <person name="Hannenhalli S."/>
            <person name="Turner R."/>
            <person name="Yooseph S."/>
            <person name="Lu F."/>
            <person name="Nusskern D.R."/>
            <person name="Shue B.C."/>
            <person name="Zheng X.H."/>
            <person name="Zhong F."/>
            <person name="Delcher A.L."/>
            <person name="Huson D.H."/>
            <person name="Kravitz S.A."/>
            <person name="Mouchard L."/>
            <person name="Reinert K."/>
            <person name="Remington K.A."/>
            <person name="Clark A.G."/>
            <person name="Waterman M.S."/>
            <person name="Eichler E.E."/>
            <person name="Adams M.D."/>
            <person name="Hunkapiller M.W."/>
            <person name="Myers E.W."/>
            <person name="Venter J.C."/>
        </authorList>
    </citation>
    <scope>NUCLEOTIDE SEQUENCE [LARGE SCALE GENOMIC DNA]</scope>
</reference>
<reference key="10">
    <citation type="journal article" date="2004" name="Genome Res.">
        <title>The status, quality, and expansion of the NIH full-length cDNA project: the Mammalian Gene Collection (MGC).</title>
        <authorList>
            <consortium name="The MGC Project Team"/>
        </authorList>
    </citation>
    <scope>NUCLEOTIDE SEQUENCE [LARGE SCALE MRNA] (ISOFORM 1)</scope>
    <source>
        <tissue>Brain</tissue>
    </source>
</reference>
<reference key="11">
    <citation type="journal article" date="1996" name="J. Clin. Immunol.">
        <title>Predominant expression of type II vasoactive intestinal peptide receptors by human T lymphoblastoma cells: transduction of both Ca2+ and cyclic AMP signals.</title>
        <authorList>
            <person name="Xia M."/>
            <person name="Sreedharan S.P."/>
            <person name="Goetzl E.J."/>
        </authorList>
    </citation>
    <scope>NUCLEOTIDE SEQUENCE [MRNA] OF 244-318 (ISOFORM 1)</scope>
    <scope>TISSUE SPECIFICITY</scope>
    <source>
        <tissue>T-cell</tissue>
    </source>
</reference>
<reference key="12">
    <citation type="submission" date="2010-03" db="PDB data bank">
        <title>Crystal structure of the extracellular domain of human vasoactive intestinal polypeptide receptor 2.</title>
        <authorList>
            <consortium name="Structural genomics consortium (SGC)"/>
        </authorList>
    </citation>
    <scope>X-RAY CRYSTALLOGRAPHY (2.1 ANGSTROMS) OF 26-118</scope>
    <scope>DISULFIDE BONDS</scope>
</reference>
<reference evidence="12 13" key="13">
    <citation type="journal article" date="2022" name="Nat. Commun.">
        <title>A distinctive ligand recognition mechanism by the human vasoactive intestinal polypeptide receptor 2.</title>
        <authorList>
            <person name="Xu Y."/>
            <person name="Feng W."/>
            <person name="Zhou Q."/>
            <person name="Liang A."/>
            <person name="Li J."/>
            <person name="Dai A."/>
            <person name="Zhao F."/>
            <person name="Yan J."/>
            <person name="Chen C.W."/>
            <person name="Li H."/>
            <person name="Zhao L.H."/>
            <person name="Xia T."/>
            <person name="Jiang Y."/>
            <person name="Xu H.E."/>
            <person name="Yang D."/>
            <person name="Wang M.W."/>
        </authorList>
    </citation>
    <scope>STRUCTURE BY ELECTRON MICROSCOPY (2.74 ANGSTROMS) OF 24-438 IN COMPLEX WITH ADCYAP1/PACAP27 AND G PROTEINS</scope>
    <scope>INTERACTION WITH ADCYAP1</scope>
    <scope>FUNCTION</scope>
    <scope>SUBCELLULAR LOCATION</scope>
    <scope>MUTAGENESIS OF PHE-79; TYR-123; TYR-184; LEU-209 AND ILE-357</scope>
</reference>
<dbReference type="EMBL" id="L36566">
    <property type="protein sequence ID" value="AAC37569.1"/>
    <property type="molecule type" value="mRNA"/>
</dbReference>
<dbReference type="EMBL" id="L40764">
    <property type="protein sequence ID" value="AAC41756.1"/>
    <property type="molecule type" value="Genomic_DNA"/>
</dbReference>
<dbReference type="EMBL" id="U18810">
    <property type="protein sequence ID" value="AAC50872.1"/>
    <property type="molecule type" value="mRNA"/>
</dbReference>
<dbReference type="EMBL" id="X95097">
    <property type="protein sequence ID" value="CAA64474.1"/>
    <property type="molecule type" value="mRNA"/>
</dbReference>
<dbReference type="EMBL" id="Y18423">
    <property type="protein sequence ID" value="CAB41899.1"/>
    <property type="molecule type" value="Genomic_DNA"/>
</dbReference>
<dbReference type="EMBL" id="Y18424">
    <property type="protein sequence ID" value="CAB41899.1"/>
    <property type="status" value="JOINED"/>
    <property type="molecule type" value="Genomic_DNA"/>
</dbReference>
<dbReference type="EMBL" id="Y18425">
    <property type="protein sequence ID" value="CAB41899.1"/>
    <property type="status" value="JOINED"/>
    <property type="molecule type" value="Genomic_DNA"/>
</dbReference>
<dbReference type="EMBL" id="Y18426">
    <property type="protein sequence ID" value="CAB41899.1"/>
    <property type="status" value="JOINED"/>
    <property type="molecule type" value="Genomic_DNA"/>
</dbReference>
<dbReference type="EMBL" id="Y18427">
    <property type="protein sequence ID" value="CAB41899.1"/>
    <property type="status" value="JOINED"/>
    <property type="molecule type" value="Genomic_DNA"/>
</dbReference>
<dbReference type="EMBL" id="Y18428">
    <property type="protein sequence ID" value="CAB41899.1"/>
    <property type="status" value="JOINED"/>
    <property type="molecule type" value="Genomic_DNA"/>
</dbReference>
<dbReference type="EMBL" id="Y18429">
    <property type="protein sequence ID" value="CAB41899.1"/>
    <property type="status" value="JOINED"/>
    <property type="molecule type" value="Genomic_DNA"/>
</dbReference>
<dbReference type="EMBL" id="Y18430">
    <property type="protein sequence ID" value="CAB41899.1"/>
    <property type="status" value="JOINED"/>
    <property type="molecule type" value="Genomic_DNA"/>
</dbReference>
<dbReference type="EMBL" id="Y18431">
    <property type="protein sequence ID" value="CAB41899.1"/>
    <property type="status" value="JOINED"/>
    <property type="molecule type" value="Genomic_DNA"/>
</dbReference>
<dbReference type="EMBL" id="BT007118">
    <property type="protein sequence ID" value="AAP35782.1"/>
    <property type="molecule type" value="mRNA"/>
</dbReference>
<dbReference type="EMBL" id="AK131406">
    <property type="protein sequence ID" value="BAD18553.1"/>
    <property type="molecule type" value="mRNA"/>
</dbReference>
<dbReference type="EMBL" id="AC004863">
    <property type="status" value="NOT_ANNOTATED_CDS"/>
    <property type="molecule type" value="Genomic_DNA"/>
</dbReference>
<dbReference type="EMBL" id="AC007269">
    <property type="status" value="NOT_ANNOTATED_CDS"/>
    <property type="molecule type" value="Genomic_DNA"/>
</dbReference>
<dbReference type="EMBL" id="AF027390">
    <property type="status" value="NOT_ANNOTATED_CDS"/>
    <property type="molecule type" value="Genomic_DNA"/>
</dbReference>
<dbReference type="EMBL" id="CH236954">
    <property type="protein sequence ID" value="EAL23936.1"/>
    <property type="molecule type" value="Genomic_DNA"/>
</dbReference>
<dbReference type="EMBL" id="CH471149">
    <property type="protein sequence ID" value="EAX04596.1"/>
    <property type="molecule type" value="Genomic_DNA"/>
</dbReference>
<dbReference type="EMBL" id="BC010569">
    <property type="protein sequence ID" value="AAH10569.1"/>
    <property type="molecule type" value="mRNA"/>
</dbReference>
<dbReference type="CCDS" id="CCDS5950.1">
    <molecule id="P41587-1"/>
</dbReference>
<dbReference type="CCDS" id="CCDS78295.1">
    <molecule id="P41587-2"/>
</dbReference>
<dbReference type="PIR" id="G02822">
    <property type="entry name" value="G02822"/>
</dbReference>
<dbReference type="RefSeq" id="NP_001291451.1">
    <property type="nucleotide sequence ID" value="NM_001304522.1"/>
</dbReference>
<dbReference type="RefSeq" id="NP_001295188.1">
    <molecule id="P41587-2"/>
    <property type="nucleotide sequence ID" value="NM_001308259.1"/>
</dbReference>
<dbReference type="RefSeq" id="NP_003373.2">
    <molecule id="P41587-1"/>
    <property type="nucleotide sequence ID" value="NM_003382.4"/>
</dbReference>
<dbReference type="PDB" id="2X57">
    <property type="method" value="X-ray"/>
    <property type="resolution" value="2.10 A"/>
    <property type="chains" value="A/B/C=26-118"/>
</dbReference>
<dbReference type="PDB" id="7VQX">
    <property type="method" value="EM"/>
    <property type="resolution" value="2.74 A"/>
    <property type="chains" value="R=24-438"/>
</dbReference>
<dbReference type="PDB" id="7WBJ">
    <property type="method" value="EM"/>
    <property type="resolution" value="3.42 A"/>
    <property type="chains" value="R=24-438"/>
</dbReference>
<dbReference type="PDBsum" id="2X57"/>
<dbReference type="PDBsum" id="7VQX"/>
<dbReference type="PDBsum" id="7WBJ"/>
<dbReference type="EMDB" id="EMD-32095"/>
<dbReference type="EMDB" id="EMD-32401"/>
<dbReference type="SMR" id="P41587"/>
<dbReference type="BioGRID" id="113275">
    <property type="interactions" value="205"/>
</dbReference>
<dbReference type="CORUM" id="P41587"/>
<dbReference type="FunCoup" id="P41587">
    <property type="interactions" value="1060"/>
</dbReference>
<dbReference type="IntAct" id="P41587">
    <property type="interactions" value="191"/>
</dbReference>
<dbReference type="MINT" id="P41587"/>
<dbReference type="STRING" id="9606.ENSP00000262178"/>
<dbReference type="BindingDB" id="P41587"/>
<dbReference type="ChEMBL" id="CHEMBL4532"/>
<dbReference type="GuidetoPHARMACOLOGY" id="372"/>
<dbReference type="GlyCosmos" id="P41587">
    <property type="glycosylation" value="3 sites, No reported glycans"/>
</dbReference>
<dbReference type="GlyGen" id="P41587">
    <property type="glycosylation" value="4 sites"/>
</dbReference>
<dbReference type="iPTMnet" id="P41587"/>
<dbReference type="PhosphoSitePlus" id="P41587"/>
<dbReference type="BioMuta" id="VIPR2"/>
<dbReference type="DMDM" id="2506490"/>
<dbReference type="MassIVE" id="P41587"/>
<dbReference type="PaxDb" id="9606-ENSP00000262178"/>
<dbReference type="PeptideAtlas" id="P41587"/>
<dbReference type="ProteomicsDB" id="55470">
    <molecule id="P41587-1"/>
</dbReference>
<dbReference type="ProteomicsDB" id="67967"/>
<dbReference type="Antibodypedia" id="18979">
    <property type="antibodies" value="332 antibodies from 36 providers"/>
</dbReference>
<dbReference type="DNASU" id="7434"/>
<dbReference type="Ensembl" id="ENST00000262178.7">
    <molecule id="P41587-1"/>
    <property type="protein sequence ID" value="ENSP00000262178.2"/>
    <property type="gene ID" value="ENSG00000106018.14"/>
</dbReference>
<dbReference type="Ensembl" id="ENST00000377633.7">
    <molecule id="P41587-2"/>
    <property type="protein sequence ID" value="ENSP00000366860.3"/>
    <property type="gene ID" value="ENSG00000106018.14"/>
</dbReference>
<dbReference type="GeneID" id="7434"/>
<dbReference type="KEGG" id="hsa:7434"/>
<dbReference type="MANE-Select" id="ENST00000262178.7">
    <property type="protein sequence ID" value="ENSP00000262178.2"/>
    <property type="RefSeq nucleotide sequence ID" value="NM_003382.5"/>
    <property type="RefSeq protein sequence ID" value="NP_003373.2"/>
</dbReference>
<dbReference type="UCSC" id="uc064jts.1">
    <molecule id="P41587-1"/>
    <property type="organism name" value="human"/>
</dbReference>
<dbReference type="AGR" id="HGNC:12695"/>
<dbReference type="CTD" id="7434"/>
<dbReference type="DisGeNET" id="7434"/>
<dbReference type="GeneCards" id="VIPR2"/>
<dbReference type="HGNC" id="HGNC:12695">
    <property type="gene designation" value="VIPR2"/>
</dbReference>
<dbReference type="HPA" id="ENSG00000106018">
    <property type="expression patterns" value="Low tissue specificity"/>
</dbReference>
<dbReference type="MalaCards" id="VIPR2"/>
<dbReference type="MIM" id="601970">
    <property type="type" value="gene"/>
</dbReference>
<dbReference type="neXtProt" id="NX_P41587"/>
<dbReference type="OpenTargets" id="ENSG00000106018"/>
<dbReference type="PharmGKB" id="PA37314"/>
<dbReference type="VEuPathDB" id="HostDB:ENSG00000106018"/>
<dbReference type="eggNOG" id="KOG4564">
    <property type="taxonomic scope" value="Eukaryota"/>
</dbReference>
<dbReference type="GeneTree" id="ENSGT00940000158089"/>
<dbReference type="HOGENOM" id="CLU_002753_4_4_1"/>
<dbReference type="InParanoid" id="P41587"/>
<dbReference type="OMA" id="IWIITRV"/>
<dbReference type="OrthoDB" id="5967113at2759"/>
<dbReference type="PAN-GO" id="P41587">
    <property type="GO annotations" value="5 GO annotations based on evolutionary models"/>
</dbReference>
<dbReference type="PhylomeDB" id="P41587"/>
<dbReference type="TreeFam" id="TF315710"/>
<dbReference type="PathwayCommons" id="P41587"/>
<dbReference type="Reactome" id="R-HSA-418555">
    <property type="pathway name" value="G alpha (s) signalling events"/>
</dbReference>
<dbReference type="Reactome" id="R-HSA-420092">
    <property type="pathway name" value="Glucagon-type ligand receptors"/>
</dbReference>
<dbReference type="SignaLink" id="P41587"/>
<dbReference type="BioGRID-ORCS" id="7434">
    <property type="hits" value="14 hits in 1149 CRISPR screens"/>
</dbReference>
<dbReference type="ChiTaRS" id="VIPR2">
    <property type="organism name" value="human"/>
</dbReference>
<dbReference type="EvolutionaryTrace" id="P41587"/>
<dbReference type="GeneWiki" id="VIPR2"/>
<dbReference type="GenomeRNAi" id="7434"/>
<dbReference type="Pharos" id="P41587">
    <property type="development level" value="Tchem"/>
</dbReference>
<dbReference type="PRO" id="PR:P41587"/>
<dbReference type="Proteomes" id="UP000005640">
    <property type="component" value="Chromosome 7"/>
</dbReference>
<dbReference type="RNAct" id="P41587">
    <property type="molecule type" value="protein"/>
</dbReference>
<dbReference type="Bgee" id="ENSG00000106018">
    <property type="expression patterns" value="Expressed in mucosa of stomach and 131 other cell types or tissues"/>
</dbReference>
<dbReference type="ExpressionAtlas" id="P41587">
    <property type="expression patterns" value="baseline and differential"/>
</dbReference>
<dbReference type="GO" id="GO:0005886">
    <property type="term" value="C:plasma membrane"/>
    <property type="evidence" value="ECO:0000314"/>
    <property type="project" value="UniProt"/>
</dbReference>
<dbReference type="GO" id="GO:0008528">
    <property type="term" value="F:G protein-coupled peptide receptor activity"/>
    <property type="evidence" value="ECO:0000318"/>
    <property type="project" value="GO_Central"/>
</dbReference>
<dbReference type="GO" id="GO:0004930">
    <property type="term" value="F:G protein-coupled receptor activity"/>
    <property type="evidence" value="ECO:0000304"/>
    <property type="project" value="ProtInc"/>
</dbReference>
<dbReference type="GO" id="GO:0017046">
    <property type="term" value="F:peptide hormone binding"/>
    <property type="evidence" value="ECO:0000318"/>
    <property type="project" value="GO_Central"/>
</dbReference>
<dbReference type="GO" id="GO:0001634">
    <property type="term" value="F:pituitary adenylate cyclase-activating polypeptide receptor activity"/>
    <property type="evidence" value="ECO:0000315"/>
    <property type="project" value="UniProtKB"/>
</dbReference>
<dbReference type="GO" id="GO:0004999">
    <property type="term" value="F:vasoactive intestinal polypeptide receptor activity"/>
    <property type="evidence" value="ECO:0000314"/>
    <property type="project" value="UniProt"/>
</dbReference>
<dbReference type="GO" id="GO:0007189">
    <property type="term" value="P:adenylate cyclase-activating G protein-coupled receptor signaling pathway"/>
    <property type="evidence" value="ECO:0000314"/>
    <property type="project" value="UniProt"/>
</dbReference>
<dbReference type="GO" id="GO:0007188">
    <property type="term" value="P:adenylate cyclase-modulating G protein-coupled receptor signaling pathway"/>
    <property type="evidence" value="ECO:0000318"/>
    <property type="project" value="GO_Central"/>
</dbReference>
<dbReference type="GO" id="GO:0007166">
    <property type="term" value="P:cell surface receptor signaling pathway"/>
    <property type="evidence" value="ECO:0007669"/>
    <property type="project" value="InterPro"/>
</dbReference>
<dbReference type="GO" id="GO:0007267">
    <property type="term" value="P:cell-cell signaling"/>
    <property type="evidence" value="ECO:0000304"/>
    <property type="project" value="ProtInc"/>
</dbReference>
<dbReference type="GO" id="GO:0007165">
    <property type="term" value="P:signal transduction"/>
    <property type="evidence" value="ECO:0000304"/>
    <property type="project" value="ProtInc"/>
</dbReference>
<dbReference type="CDD" id="cd15986">
    <property type="entry name" value="7tmB1_VIP-R2"/>
    <property type="match status" value="1"/>
</dbReference>
<dbReference type="FunFam" id="1.20.1070.10:FF:000032">
    <property type="entry name" value="Vasoactive intestinal polypeptide receptor 1"/>
    <property type="match status" value="1"/>
</dbReference>
<dbReference type="FunFam" id="4.10.1240.10:FF:000015">
    <property type="entry name" value="Vasoactive intestinal polypeptide receptor 2"/>
    <property type="match status" value="1"/>
</dbReference>
<dbReference type="Gene3D" id="4.10.1240.10">
    <property type="entry name" value="GPCR, family 2, extracellular hormone receptor domain"/>
    <property type="match status" value="1"/>
</dbReference>
<dbReference type="Gene3D" id="1.20.1070.10">
    <property type="entry name" value="Rhodopsin 7-helix transmembrane proteins"/>
    <property type="match status" value="1"/>
</dbReference>
<dbReference type="InterPro" id="IPR050332">
    <property type="entry name" value="GPCR_2"/>
</dbReference>
<dbReference type="InterPro" id="IPR017981">
    <property type="entry name" value="GPCR_2-like_7TM"/>
</dbReference>
<dbReference type="InterPro" id="IPR036445">
    <property type="entry name" value="GPCR_2_extracell_dom_sf"/>
</dbReference>
<dbReference type="InterPro" id="IPR001879">
    <property type="entry name" value="GPCR_2_extracellular_dom"/>
</dbReference>
<dbReference type="InterPro" id="IPR000832">
    <property type="entry name" value="GPCR_2_secretin-like"/>
</dbReference>
<dbReference type="InterPro" id="IPR017983">
    <property type="entry name" value="GPCR_2_secretin-like_CS"/>
</dbReference>
<dbReference type="InterPro" id="IPR001571">
    <property type="entry name" value="GPCR_2_VIP_rcpt"/>
</dbReference>
<dbReference type="InterPro" id="IPR002284">
    <property type="entry name" value="GPCR_2_VIP_rcpt_2"/>
</dbReference>
<dbReference type="InterPro" id="IPR047035">
    <property type="entry name" value="VIP-R2_7TM"/>
</dbReference>
<dbReference type="PANTHER" id="PTHR45620">
    <property type="entry name" value="PDF RECEPTOR-LIKE PROTEIN-RELATED"/>
    <property type="match status" value="1"/>
</dbReference>
<dbReference type="PANTHER" id="PTHR45620:SF22">
    <property type="entry name" value="VASOACTIVE INTESTINAL POLYPEPTIDE RECEPTOR 2"/>
    <property type="match status" value="1"/>
</dbReference>
<dbReference type="Pfam" id="PF00002">
    <property type="entry name" value="7tm_2"/>
    <property type="match status" value="1"/>
</dbReference>
<dbReference type="Pfam" id="PF02793">
    <property type="entry name" value="HRM"/>
    <property type="match status" value="1"/>
</dbReference>
<dbReference type="PRINTS" id="PR00249">
    <property type="entry name" value="GPCRSECRETIN"/>
</dbReference>
<dbReference type="PRINTS" id="PR00491">
    <property type="entry name" value="VASOACTVEIPR"/>
</dbReference>
<dbReference type="PRINTS" id="PR01155">
    <property type="entry name" value="VIP2RECEPTOR"/>
</dbReference>
<dbReference type="SMART" id="SM00008">
    <property type="entry name" value="HormR"/>
    <property type="match status" value="1"/>
</dbReference>
<dbReference type="SUPFAM" id="SSF81321">
    <property type="entry name" value="Family A G protein-coupled receptor-like"/>
    <property type="match status" value="1"/>
</dbReference>
<dbReference type="SUPFAM" id="SSF111418">
    <property type="entry name" value="Hormone receptor domain"/>
    <property type="match status" value="1"/>
</dbReference>
<dbReference type="PROSITE" id="PS00649">
    <property type="entry name" value="G_PROTEIN_RECEP_F2_1"/>
    <property type="match status" value="1"/>
</dbReference>
<dbReference type="PROSITE" id="PS00650">
    <property type="entry name" value="G_PROTEIN_RECEP_F2_2"/>
    <property type="match status" value="1"/>
</dbReference>
<dbReference type="PROSITE" id="PS50227">
    <property type="entry name" value="G_PROTEIN_RECEP_F2_3"/>
    <property type="match status" value="1"/>
</dbReference>
<dbReference type="PROSITE" id="PS50261">
    <property type="entry name" value="G_PROTEIN_RECEP_F2_4"/>
    <property type="match status" value="1"/>
</dbReference>
<accession>P41587</accession>
<accession>Q13053</accession>
<accession>Q15870</accession>
<accession>Q53Y09</accession>
<accession>Q6ZN22</accession>
<accession>Q9UCW0</accession>
<name>VIPR2_HUMAN</name>
<feature type="signal peptide" evidence="2">
    <location>
        <begin position="1"/>
        <end position="23"/>
    </location>
</feature>
<feature type="chain" id="PRO_0000012860" description="Vasoactive intestinal polypeptide receptor 2">
    <location>
        <begin position="24"/>
        <end position="438"/>
    </location>
</feature>
<feature type="topological domain" description="Extracellular" evidence="9">
    <location>
        <begin position="24"/>
        <end position="124"/>
    </location>
</feature>
<feature type="transmembrane region" description="Helical; Name=1" evidence="3 12">
    <location>
        <begin position="125"/>
        <end position="150"/>
    </location>
</feature>
<feature type="topological domain" description="Cytoplasmic" evidence="9">
    <location>
        <begin position="151"/>
        <end position="158"/>
    </location>
</feature>
<feature type="transmembrane region" description="Helical; Name=2" evidence="3 12">
    <location>
        <begin position="159"/>
        <end position="180"/>
    </location>
</feature>
<feature type="topological domain" description="Extracellular" evidence="9">
    <location>
        <begin position="181"/>
        <end position="203"/>
    </location>
</feature>
<feature type="transmembrane region" description="Helical; Name=3" evidence="3 12">
    <location>
        <begin position="204"/>
        <end position="228"/>
    </location>
</feature>
<feature type="topological domain" description="Cytoplasmic" evidence="9">
    <location>
        <begin position="229"/>
        <end position="239"/>
    </location>
</feature>
<feature type="transmembrane region" description="Helical; Name=4" evidence="3 12">
    <location>
        <begin position="240"/>
        <end position="261"/>
    </location>
</feature>
<feature type="topological domain" description="Extracellular" evidence="9">
    <location>
        <begin position="262"/>
        <end position="280"/>
    </location>
</feature>
<feature type="transmembrane region" description="Helical; Name=5" evidence="3 12">
    <location>
        <begin position="281"/>
        <end position="304"/>
    </location>
</feature>
<feature type="topological domain" description="Cytoplasmic" evidence="9">
    <location>
        <begin position="305"/>
        <end position="325"/>
    </location>
</feature>
<feature type="transmembrane region" description="Helical; Name=6" evidence="3 12">
    <location>
        <begin position="326"/>
        <end position="346"/>
    </location>
</feature>
<feature type="topological domain" description="Extracellular" evidence="9">
    <location>
        <begin position="347"/>
        <end position="354"/>
    </location>
</feature>
<feature type="transmembrane region" description="Helical; Name=7" evidence="3 12">
    <location>
        <begin position="355"/>
        <end position="378"/>
    </location>
</feature>
<feature type="topological domain" description="Cytoplasmic" evidence="9">
    <location>
        <begin position="379"/>
        <end position="438"/>
    </location>
</feature>
<feature type="glycosylation site" description="N-linked (GlcNAc...) asparagine" evidence="2">
    <location>
        <position position="58"/>
    </location>
</feature>
<feature type="glycosylation site" description="N-linked (GlcNAc...) asparagine" evidence="2">
    <location>
        <position position="88"/>
    </location>
</feature>
<feature type="glycosylation site" description="N-linked (GlcNAc...) asparagine" evidence="2">
    <location>
        <position position="92"/>
    </location>
</feature>
<feature type="disulfide bond" evidence="3 7 12">
    <location>
        <begin position="38"/>
        <end position="61"/>
    </location>
</feature>
<feature type="disulfide bond" evidence="3 7 12">
    <location>
        <begin position="52"/>
        <end position="93"/>
    </location>
</feature>
<feature type="disulfide bond" evidence="3 7 12">
    <location>
        <begin position="75"/>
        <end position="109"/>
    </location>
</feature>
<feature type="disulfide bond" evidence="3 12">
    <location>
        <begin position="202"/>
        <end position="271"/>
    </location>
</feature>
<feature type="splice variant" id="VSP_056684" description="In isoform 2." evidence="8">
    <original>MRTLLPPALLTCWLLAPVNSIHPECRFHLEIQEEETKCAELLRSQTEKHKACSGVWDNITCWRPANVGETVTVPCPKVFSNFYSKAGNISKNCTSDGWSETFP</original>
    <variation>MPLWEAPSDHPANPPATLQGHTSLPGCQEEPARDPQSGLPQITSESSSFSEGSLPSWSSGPAGAKLNASHEGIGSSSDGNGDSKAATERVVSAMDTVRRKHPE</variation>
    <location>
        <begin position="1"/>
        <end position="103"/>
    </location>
</feature>
<feature type="splice variant" id="VSP_056685" description="In isoform 2." evidence="8">
    <location>
        <begin position="104"/>
        <end position="119"/>
    </location>
</feature>
<feature type="sequence variant" id="VAR_011811" description="In dbSNP:rs1062609.">
    <original>A</original>
    <variation>T</variation>
    <location>
        <position position="39"/>
    </location>
</feature>
<feature type="sequence variant" id="VAR_011812" description="In dbSNP:rs1042620.">
    <original>R</original>
    <variation>H</variation>
    <location>
        <position position="412"/>
    </location>
</feature>
<feature type="mutagenesis site" description="Decreased ADCYAP1/PACAP27 potency for VIPR2." evidence="3">
    <original>F</original>
    <variation>A</variation>
    <location>
        <position position="79"/>
    </location>
</feature>
<feature type="mutagenesis site" description="Decreased ADCYAP1/PACAP27 potency for VIPR2." evidence="3">
    <original>Y</original>
    <variation>A</variation>
    <location>
        <position position="123"/>
    </location>
</feature>
<feature type="mutagenesis site" description="Decreased ADCYAP1/PACAP27 potency for VIPR2." evidence="3">
    <original>Y</original>
    <variation>A</variation>
    <location>
        <position position="184"/>
    </location>
</feature>
<feature type="mutagenesis site" description="Increased ADCYAP1/PACAP27 potency for VIPR2." evidence="3">
    <original>L</original>
    <variation>A</variation>
    <location>
        <position position="209"/>
    </location>
</feature>
<feature type="mutagenesis site" description="Decreased ADCYAP1/PACAP27 potency for VIPR2." evidence="3">
    <original>I</original>
    <variation>A</variation>
    <location>
        <position position="357"/>
    </location>
</feature>
<feature type="sequence conflict" description="In Ref. 1; AAC37569/AAC41756 and 3; AAC50872." evidence="9" ref="1 3">
    <original>G</original>
    <variation>A</variation>
    <location>
        <position position="424"/>
    </location>
</feature>
<feature type="helix" evidence="14">
    <location>
        <begin position="26"/>
        <end position="44"/>
    </location>
</feature>
<feature type="turn" evidence="14">
    <location>
        <begin position="45"/>
        <end position="47"/>
    </location>
</feature>
<feature type="strand" evidence="14">
    <location>
        <begin position="55"/>
        <end position="57"/>
    </location>
</feature>
<feature type="strand" evidence="14">
    <location>
        <begin position="60"/>
        <end position="62"/>
    </location>
</feature>
<feature type="strand" evidence="14">
    <location>
        <begin position="70"/>
        <end position="74"/>
    </location>
</feature>
<feature type="helix" evidence="14">
    <location>
        <begin position="77"/>
        <end position="82"/>
    </location>
</feature>
<feature type="strand" evidence="14">
    <location>
        <begin position="83"/>
        <end position="85"/>
    </location>
</feature>
<feature type="strand" evidence="14">
    <location>
        <begin position="88"/>
        <end position="94"/>
    </location>
</feature>
<feature type="strand" evidence="16">
    <location>
        <begin position="95"/>
        <end position="103"/>
    </location>
</feature>
<feature type="helix" evidence="14">
    <location>
        <begin position="105"/>
        <end position="109"/>
    </location>
</feature>
<feature type="helix" evidence="15">
    <location>
        <begin position="116"/>
        <end position="118"/>
    </location>
</feature>
<feature type="helix" evidence="15">
    <location>
        <begin position="119"/>
        <end position="150"/>
    </location>
</feature>
<feature type="helix" evidence="15">
    <location>
        <begin position="152"/>
        <end position="154"/>
    </location>
</feature>
<feature type="helix" evidence="15">
    <location>
        <begin position="157"/>
        <end position="183"/>
    </location>
</feature>
<feature type="helix" evidence="15">
    <location>
        <begin position="196"/>
        <end position="232"/>
    </location>
</feature>
<feature type="helix" evidence="15">
    <location>
        <begin position="241"/>
        <end position="265"/>
    </location>
</feature>
<feature type="helix" evidence="15">
    <location>
        <begin position="278"/>
        <end position="311"/>
    </location>
</feature>
<feature type="helix" evidence="15">
    <location>
        <begin position="324"/>
        <end position="337"/>
    </location>
</feature>
<feature type="helix" evidence="15">
    <location>
        <begin position="339"/>
        <end position="341"/>
    </location>
</feature>
<feature type="helix" evidence="15">
    <location>
        <begin position="342"/>
        <end position="346"/>
    </location>
</feature>
<feature type="helix" evidence="15">
    <location>
        <begin position="354"/>
        <end position="364"/>
    </location>
</feature>
<feature type="helix" evidence="15">
    <location>
        <begin position="367"/>
        <end position="376"/>
    </location>
</feature>
<feature type="helix" evidence="15">
    <location>
        <begin position="380"/>
        <end position="392"/>
    </location>
</feature>